<comment type="function">
    <text evidence="3">Catalyzes the biosynthesis of histamine from histidine.</text>
</comment>
<comment type="catalytic activity">
    <reaction evidence="3">
        <text>L-histidine + H(+) = histamine + CO2</text>
        <dbReference type="Rhea" id="RHEA:20840"/>
        <dbReference type="ChEBI" id="CHEBI:15378"/>
        <dbReference type="ChEBI" id="CHEBI:16526"/>
        <dbReference type="ChEBI" id="CHEBI:57595"/>
        <dbReference type="ChEBI" id="CHEBI:58432"/>
        <dbReference type="EC" id="4.1.1.22"/>
    </reaction>
</comment>
<comment type="cofactor">
    <cofactor evidence="3">
        <name>pyridoxal 5'-phosphate</name>
        <dbReference type="ChEBI" id="CHEBI:597326"/>
    </cofactor>
</comment>
<comment type="biophysicochemical properties">
    <kinetics>
        <KM evidence="3">0.1 mM for histidine</KM>
        <Vmax evidence="3">1880.0 nmol/min/mg enzyme</Vmax>
    </kinetics>
</comment>
<comment type="pathway">
    <text>Amine and polyamine biosynthesis; histamine biosynthesis; histamine from L-histidine: step 1/1.</text>
</comment>
<comment type="subunit">
    <text evidence="3">Homodimer.</text>
</comment>
<comment type="interaction">
    <interactant intactId="EBI-10200283">
        <id>P19113</id>
    </interactant>
    <interactant intactId="EBI-740376">
        <id>Q86UW9</id>
        <label>DTX2</label>
    </interactant>
    <organismsDiffer>false</organismsDiffer>
    <experiments>6</experiments>
</comment>
<comment type="alternative products">
    <event type="alternative splicing"/>
    <isoform>
        <id>P19113-1</id>
        <name>1</name>
        <sequence type="displayed"/>
    </isoform>
    <isoform>
        <id>P19113-2</id>
        <name>2</name>
        <sequence type="described" ref="VSP_056296"/>
    </isoform>
</comment>
<comment type="similarity">
    <text evidence="5">Belongs to the group II decarboxylase family.</text>
</comment>
<feature type="chain" id="PRO_0000146950" description="Histidine decarboxylase">
    <location>
        <begin position="1"/>
        <end position="662"/>
    </location>
</feature>
<feature type="binding site">
    <location>
        <position position="81"/>
    </location>
    <ligand>
        <name>substrate</name>
    </ligand>
</feature>
<feature type="binding site">
    <location>
        <position position="194"/>
    </location>
    <ligand>
        <name>substrate</name>
    </ligand>
</feature>
<feature type="modified residue" description="N6-(pyridoxal phosphate)lysine">
    <location>
        <position position="305"/>
    </location>
</feature>
<feature type="splice variant" id="VSP_056296" description="In isoform 2." evidence="4">
    <location>
        <begin position="348"/>
        <end position="380"/>
    </location>
</feature>
<feature type="sequence variant" id="VAR_048873" description="In dbSNP:rs17740607." evidence="1">
    <original>T</original>
    <variation>M</variation>
    <location>
        <position position="31"/>
    </location>
</feature>
<feature type="sequence variant" id="VAR_036470" description="In a colorectal cancer sample; somatic mutation." evidence="2">
    <original>E</original>
    <variation>V</variation>
    <location>
        <position position="49"/>
    </location>
</feature>
<feature type="sequence variant" id="VAR_036471" description="In a colorectal cancer sample; somatic mutation; dbSNP:rs1353958864." evidence="2">
    <original>E</original>
    <variation>K</variation>
    <location>
        <position position="285"/>
    </location>
</feature>
<feature type="sequence variant" id="VAR_048874" description="In dbSNP:rs16963486.">
    <original>F</original>
    <variation>L</variation>
    <location>
        <position position="553"/>
    </location>
</feature>
<feature type="sequence variant" id="VAR_033846" description="In dbSNP:rs2073440.">
    <original>E</original>
    <variation>D</variation>
    <location>
        <position position="644"/>
    </location>
</feature>
<feature type="mutagenesis site" description="Loss of enzyme activity." evidence="3">
    <original>K</original>
    <variation>G</variation>
    <location>
        <position position="305"/>
    </location>
</feature>
<feature type="mutagenesis site" description="Loss of enzyme activity." evidence="3">
    <original>Y</original>
    <variation>F</variation>
    <location>
        <position position="334"/>
    </location>
</feature>
<feature type="mutagenesis site" description="Strongly decreases affinity for histidine. Strongly increases affinity for L-DOPA and confers enzyme activity toward L-DOPA." evidence="3">
    <original>S</original>
    <variation>G</variation>
    <location>
        <position position="354"/>
    </location>
</feature>
<feature type="sequence conflict" description="In Ref. 3; no nucleotide entry." evidence="5" ref="3">
    <original>N</original>
    <variation>M</variation>
    <location>
        <position position="118"/>
    </location>
</feature>
<feature type="sequence conflict" description="In Ref. 1; CAA38196 and 3; no nucleotide entry." evidence="5" ref="1 3">
    <original>S</original>
    <variation>Q</variation>
    <location>
        <position position="148"/>
    </location>
</feature>
<feature type="sequence conflict" description="In Ref. 3; no nucleotide entry." evidence="5" ref="3">
    <original>W</original>
    <variation>M</variation>
    <location>
        <position position="500"/>
    </location>
</feature>
<feature type="helix" evidence="6">
    <location>
        <begin position="4"/>
        <end position="23"/>
    </location>
</feature>
<feature type="helix" evidence="6">
    <location>
        <begin position="25"/>
        <end position="27"/>
    </location>
</feature>
<feature type="turn" evidence="6">
    <location>
        <begin position="36"/>
        <end position="39"/>
    </location>
</feature>
<feature type="helix" evidence="6">
    <location>
        <begin position="40"/>
        <end position="42"/>
    </location>
</feature>
<feature type="helix" evidence="6">
    <location>
        <begin position="54"/>
        <end position="64"/>
    </location>
</feature>
<feature type="helix" evidence="6">
    <location>
        <begin position="66"/>
        <end position="68"/>
    </location>
</feature>
<feature type="strand" evidence="6">
    <location>
        <begin position="79"/>
        <end position="81"/>
    </location>
</feature>
<feature type="helix" evidence="6">
    <location>
        <begin position="87"/>
        <end position="99"/>
    </location>
</feature>
<feature type="turn" evidence="6">
    <location>
        <begin position="106"/>
        <end position="108"/>
    </location>
</feature>
<feature type="helix" evidence="6">
    <location>
        <begin position="110"/>
        <end position="127"/>
    </location>
</feature>
<feature type="helix" evidence="6">
    <location>
        <begin position="131"/>
        <end position="133"/>
    </location>
</feature>
<feature type="strand" evidence="7">
    <location>
        <begin position="135"/>
        <end position="137"/>
    </location>
</feature>
<feature type="strand" evidence="6">
    <location>
        <begin position="143"/>
        <end position="148"/>
    </location>
</feature>
<feature type="helix" evidence="6">
    <location>
        <begin position="150"/>
        <end position="172"/>
    </location>
</feature>
<feature type="helix" evidence="6">
    <location>
        <begin position="178"/>
        <end position="182"/>
    </location>
</feature>
<feature type="strand" evidence="6">
    <location>
        <begin position="185"/>
        <end position="190"/>
    </location>
</feature>
<feature type="helix" evidence="6">
    <location>
        <begin position="195"/>
        <end position="204"/>
    </location>
</feature>
<feature type="strand" evidence="6">
    <location>
        <begin position="207"/>
        <end position="211"/>
    </location>
</feature>
<feature type="helix" evidence="6">
    <location>
        <begin position="221"/>
        <end position="233"/>
    </location>
</feature>
<feature type="strand" evidence="6">
    <location>
        <begin position="237"/>
        <end position="246"/>
    </location>
</feature>
<feature type="turn" evidence="6">
    <location>
        <begin position="248"/>
        <end position="250"/>
    </location>
</feature>
<feature type="helix" evidence="6">
    <location>
        <begin position="256"/>
        <end position="266"/>
    </location>
</feature>
<feature type="strand" evidence="6">
    <location>
        <begin position="269"/>
        <end position="273"/>
    </location>
</feature>
<feature type="helix" evidence="6">
    <location>
        <begin position="277"/>
        <end position="282"/>
    </location>
</feature>
<feature type="helix" evidence="6">
    <location>
        <begin position="284"/>
        <end position="290"/>
    </location>
</feature>
<feature type="helix" evidence="6">
    <location>
        <begin position="293"/>
        <end position="295"/>
    </location>
</feature>
<feature type="strand" evidence="6">
    <location>
        <begin position="297"/>
        <end position="301"/>
    </location>
</feature>
<feature type="helix" evidence="6">
    <location>
        <begin position="303"/>
        <end position="306"/>
    </location>
</feature>
<feature type="strand" evidence="6">
    <location>
        <begin position="314"/>
        <end position="320"/>
    </location>
</feature>
<feature type="helix" evidence="6">
    <location>
        <begin position="321"/>
        <end position="325"/>
    </location>
</feature>
<feature type="turn" evidence="6">
    <location>
        <begin position="326"/>
        <end position="328"/>
    </location>
</feature>
<feature type="helix" evidence="6">
    <location>
        <begin position="333"/>
        <end position="335"/>
    </location>
</feature>
<feature type="turn" evidence="6">
    <location>
        <begin position="338"/>
        <end position="342"/>
    </location>
</feature>
<feature type="helix" evidence="6">
    <location>
        <begin position="346"/>
        <end position="349"/>
    </location>
</feature>
<feature type="strand" evidence="6">
    <location>
        <begin position="350"/>
        <end position="353"/>
    </location>
</feature>
<feature type="helix" evidence="6">
    <location>
        <begin position="359"/>
        <end position="393"/>
    </location>
</feature>
<feature type="strand" evidence="6">
    <location>
        <begin position="406"/>
        <end position="415"/>
    </location>
</feature>
<feature type="helix" evidence="6">
    <location>
        <begin position="417"/>
        <end position="430"/>
    </location>
</feature>
<feature type="strand" evidence="6">
    <location>
        <begin position="432"/>
        <end position="434"/>
    </location>
</feature>
<feature type="strand" evidence="6">
    <location>
        <begin position="436"/>
        <end position="440"/>
    </location>
</feature>
<feature type="strand" evidence="6">
    <location>
        <begin position="443"/>
        <end position="449"/>
    </location>
</feature>
<feature type="helix" evidence="6">
    <location>
        <begin position="457"/>
        <end position="475"/>
    </location>
</feature>
<organism>
    <name type="scientific">Homo sapiens</name>
    <name type="common">Human</name>
    <dbReference type="NCBI Taxonomy" id="9606"/>
    <lineage>
        <taxon>Eukaryota</taxon>
        <taxon>Metazoa</taxon>
        <taxon>Chordata</taxon>
        <taxon>Craniata</taxon>
        <taxon>Vertebrata</taxon>
        <taxon>Euteleostomi</taxon>
        <taxon>Mammalia</taxon>
        <taxon>Eutheria</taxon>
        <taxon>Euarchontoglires</taxon>
        <taxon>Primates</taxon>
        <taxon>Haplorrhini</taxon>
        <taxon>Catarrhini</taxon>
        <taxon>Hominidae</taxon>
        <taxon>Homo</taxon>
    </lineage>
</organism>
<dbReference type="EC" id="4.1.1.22"/>
<dbReference type="EMBL" id="X54297">
    <property type="protein sequence ID" value="CAA38196.1"/>
    <property type="molecule type" value="mRNA"/>
</dbReference>
<dbReference type="EMBL" id="M60445">
    <property type="protein sequence ID" value="AAC41698.1"/>
    <property type="molecule type" value="mRNA"/>
</dbReference>
<dbReference type="EMBL" id="D16583">
    <property type="protein sequence ID" value="BAA04015.1"/>
    <property type="molecule type" value="Genomic_DNA"/>
</dbReference>
<dbReference type="EMBL" id="AC009753">
    <property type="status" value="NOT_ANNOTATED_CDS"/>
    <property type="molecule type" value="Genomic_DNA"/>
</dbReference>
<dbReference type="EMBL" id="AC022087">
    <property type="status" value="NOT_ANNOTATED_CDS"/>
    <property type="molecule type" value="Genomic_DNA"/>
</dbReference>
<dbReference type="EMBL" id="BC130527">
    <property type="protein sequence ID" value="AAI30528.1"/>
    <property type="molecule type" value="mRNA"/>
</dbReference>
<dbReference type="EMBL" id="BC144173">
    <property type="protein sequence ID" value="AAI44174.1"/>
    <property type="molecule type" value="mRNA"/>
</dbReference>
<dbReference type="CCDS" id="CCDS10134.1">
    <molecule id="P19113-1"/>
</dbReference>
<dbReference type="CCDS" id="CCDS76754.1">
    <molecule id="P19113-2"/>
</dbReference>
<dbReference type="PIR" id="A49882">
    <property type="entry name" value="A49882"/>
</dbReference>
<dbReference type="RefSeq" id="NP_001293075.1">
    <molecule id="P19113-2"/>
    <property type="nucleotide sequence ID" value="NM_001306146.2"/>
</dbReference>
<dbReference type="RefSeq" id="NP_002103.2">
    <molecule id="P19113-1"/>
    <property type="nucleotide sequence ID" value="NM_002112.4"/>
</dbReference>
<dbReference type="PDB" id="4E1O">
    <property type="method" value="X-ray"/>
    <property type="resolution" value="1.80 A"/>
    <property type="chains" value="A/B/C/D/E/F=2-477"/>
</dbReference>
<dbReference type="PDB" id="7EIW">
    <property type="method" value="X-ray"/>
    <property type="resolution" value="2.10 A"/>
    <property type="chains" value="A/B=2-477"/>
</dbReference>
<dbReference type="PDB" id="7EIX">
    <property type="method" value="X-ray"/>
    <property type="resolution" value="1.90 A"/>
    <property type="chains" value="A/B=2-477"/>
</dbReference>
<dbReference type="PDB" id="7EIY">
    <property type="method" value="X-ray"/>
    <property type="resolution" value="2.20 A"/>
    <property type="chains" value="A/B=2-477"/>
</dbReference>
<dbReference type="PDBsum" id="4E1O"/>
<dbReference type="PDBsum" id="7EIW"/>
<dbReference type="PDBsum" id="7EIX"/>
<dbReference type="PDBsum" id="7EIY"/>
<dbReference type="SMR" id="P19113"/>
<dbReference type="BioGRID" id="109317">
    <property type="interactions" value="3"/>
</dbReference>
<dbReference type="FunCoup" id="P19113">
    <property type="interactions" value="163"/>
</dbReference>
<dbReference type="IntAct" id="P19113">
    <property type="interactions" value="1"/>
</dbReference>
<dbReference type="STRING" id="9606.ENSP00000267845"/>
<dbReference type="ChEMBL" id="CHEMBL4523192"/>
<dbReference type="DrugBank" id="DB00117">
    <property type="generic name" value="Histidine"/>
</dbReference>
<dbReference type="DrugBank" id="DB06666">
    <property type="generic name" value="Lixivaptan"/>
</dbReference>
<dbReference type="DrugBank" id="DB00114">
    <property type="generic name" value="Pyridoxal phosphate"/>
</dbReference>
<dbReference type="CarbonylDB" id="P19113"/>
<dbReference type="iPTMnet" id="P19113"/>
<dbReference type="PhosphoSitePlus" id="P19113"/>
<dbReference type="BioMuta" id="HDC"/>
<dbReference type="DMDM" id="1352220"/>
<dbReference type="MassIVE" id="P19113"/>
<dbReference type="PaxDb" id="9606-ENSP00000267845"/>
<dbReference type="PeptideAtlas" id="P19113"/>
<dbReference type="ProteomicsDB" id="53634">
    <molecule id="P19113-1"/>
</dbReference>
<dbReference type="ProteomicsDB" id="7241"/>
<dbReference type="Antibodypedia" id="42596">
    <property type="antibodies" value="279 antibodies from 33 providers"/>
</dbReference>
<dbReference type="DNASU" id="3067"/>
<dbReference type="Ensembl" id="ENST00000267845.8">
    <molecule id="P19113-1"/>
    <property type="protein sequence ID" value="ENSP00000267845.3"/>
    <property type="gene ID" value="ENSG00000140287.11"/>
</dbReference>
<dbReference type="Ensembl" id="ENST00000543581.5">
    <molecule id="P19113-2"/>
    <property type="protein sequence ID" value="ENSP00000440252.1"/>
    <property type="gene ID" value="ENSG00000140287.11"/>
</dbReference>
<dbReference type="GeneID" id="3067"/>
<dbReference type="KEGG" id="hsa:3067"/>
<dbReference type="MANE-Select" id="ENST00000267845.8">
    <property type="protein sequence ID" value="ENSP00000267845.3"/>
    <property type="RefSeq nucleotide sequence ID" value="NM_002112.4"/>
    <property type="RefSeq protein sequence ID" value="NP_002103.2"/>
</dbReference>
<dbReference type="UCSC" id="uc001zxz.4">
    <molecule id="P19113-1"/>
    <property type="organism name" value="human"/>
</dbReference>
<dbReference type="AGR" id="HGNC:4855"/>
<dbReference type="CTD" id="3067"/>
<dbReference type="DisGeNET" id="3067"/>
<dbReference type="GeneCards" id="HDC"/>
<dbReference type="HGNC" id="HGNC:4855">
    <property type="gene designation" value="HDC"/>
</dbReference>
<dbReference type="HPA" id="ENSG00000140287">
    <property type="expression patterns" value="Tissue enhanced (brain, epididymis)"/>
</dbReference>
<dbReference type="MalaCards" id="HDC"/>
<dbReference type="MIM" id="142704">
    <property type="type" value="gene"/>
</dbReference>
<dbReference type="neXtProt" id="NX_P19113"/>
<dbReference type="OpenTargets" id="ENSG00000140287"/>
<dbReference type="PharmGKB" id="PA29233"/>
<dbReference type="VEuPathDB" id="HostDB:ENSG00000140287"/>
<dbReference type="eggNOG" id="KOG0628">
    <property type="taxonomic scope" value="Eukaryota"/>
</dbReference>
<dbReference type="GeneTree" id="ENSGT00940000157938"/>
<dbReference type="HOGENOM" id="CLU_011856_3_0_1"/>
<dbReference type="InParanoid" id="P19113"/>
<dbReference type="OMA" id="ERDPSHY"/>
<dbReference type="OrthoDB" id="639767at2759"/>
<dbReference type="PAN-GO" id="P19113">
    <property type="GO annotations" value="4 GO annotations based on evolutionary models"/>
</dbReference>
<dbReference type="PhylomeDB" id="P19113"/>
<dbReference type="TreeFam" id="TF313863"/>
<dbReference type="BioCyc" id="MetaCyc:HS06697-MONOMER"/>
<dbReference type="BRENDA" id="4.1.1.22">
    <property type="organism ID" value="2681"/>
</dbReference>
<dbReference type="PathwayCommons" id="P19113"/>
<dbReference type="Reactome" id="R-HSA-70921">
    <property type="pathway name" value="Histidine catabolism"/>
</dbReference>
<dbReference type="SABIO-RK" id="P19113"/>
<dbReference type="SignaLink" id="P19113"/>
<dbReference type="UniPathway" id="UPA00822">
    <property type="reaction ID" value="UER00786"/>
</dbReference>
<dbReference type="BioGRID-ORCS" id="3067">
    <property type="hits" value="9 hits in 1151 CRISPR screens"/>
</dbReference>
<dbReference type="EvolutionaryTrace" id="P19113"/>
<dbReference type="GeneWiki" id="Histidine_decarboxylase"/>
<dbReference type="GenomeRNAi" id="3067"/>
<dbReference type="Pharos" id="P19113">
    <property type="development level" value="Tbio"/>
</dbReference>
<dbReference type="PRO" id="PR:P19113"/>
<dbReference type="Proteomes" id="UP000005640">
    <property type="component" value="Chromosome 15"/>
</dbReference>
<dbReference type="RNAct" id="P19113">
    <property type="molecule type" value="protein"/>
</dbReference>
<dbReference type="Bgee" id="ENSG00000140287">
    <property type="expression patterns" value="Expressed in gall bladder and 125 other cell types or tissues"/>
</dbReference>
<dbReference type="ExpressionAtlas" id="P19113">
    <property type="expression patterns" value="baseline and differential"/>
</dbReference>
<dbReference type="GO" id="GO:0005737">
    <property type="term" value="C:cytoplasm"/>
    <property type="evidence" value="ECO:0000318"/>
    <property type="project" value="GO_Central"/>
</dbReference>
<dbReference type="GO" id="GO:0005829">
    <property type="term" value="C:cytosol"/>
    <property type="evidence" value="ECO:0000304"/>
    <property type="project" value="Reactome"/>
</dbReference>
<dbReference type="GO" id="GO:0004398">
    <property type="term" value="F:histidine decarboxylase activity"/>
    <property type="evidence" value="ECO:0000314"/>
    <property type="project" value="UniProtKB"/>
</dbReference>
<dbReference type="GO" id="GO:0030170">
    <property type="term" value="F:pyridoxal phosphate binding"/>
    <property type="evidence" value="ECO:0007669"/>
    <property type="project" value="InterPro"/>
</dbReference>
<dbReference type="GO" id="GO:0042423">
    <property type="term" value="P:catecholamine biosynthetic process"/>
    <property type="evidence" value="ECO:0007669"/>
    <property type="project" value="UniProtKB-KW"/>
</dbReference>
<dbReference type="GO" id="GO:0001694">
    <property type="term" value="P:histamine biosynthetic process"/>
    <property type="evidence" value="ECO:0000314"/>
    <property type="project" value="UniProtKB"/>
</dbReference>
<dbReference type="GO" id="GO:0006548">
    <property type="term" value="P:L-histidine catabolic process"/>
    <property type="evidence" value="ECO:0000314"/>
    <property type="project" value="UniProtKB"/>
</dbReference>
<dbReference type="GO" id="GO:0006547">
    <property type="term" value="P:L-histidine metabolic process"/>
    <property type="evidence" value="ECO:0000304"/>
    <property type="project" value="ProtInc"/>
</dbReference>
<dbReference type="CDD" id="cd06450">
    <property type="entry name" value="DOPA_deC_like"/>
    <property type="match status" value="1"/>
</dbReference>
<dbReference type="FunFam" id="1.20.1340.10:FF:000001">
    <property type="entry name" value="Histidine decarboxylase"/>
    <property type="match status" value="1"/>
</dbReference>
<dbReference type="FunFam" id="3.40.640.10:FF:000025">
    <property type="entry name" value="Histidine decarboxylase"/>
    <property type="match status" value="1"/>
</dbReference>
<dbReference type="FunFam" id="3.90.1150.10:FF:000018">
    <property type="entry name" value="Histidine decarboxylase"/>
    <property type="match status" value="1"/>
</dbReference>
<dbReference type="Gene3D" id="3.90.1150.10">
    <property type="entry name" value="Aspartate Aminotransferase, domain 1"/>
    <property type="match status" value="1"/>
</dbReference>
<dbReference type="Gene3D" id="1.20.1340.10">
    <property type="entry name" value="dopa decarboxylase, N-terminal domain"/>
    <property type="match status" value="1"/>
</dbReference>
<dbReference type="Gene3D" id="3.40.640.10">
    <property type="entry name" value="Type I PLP-dependent aspartate aminotransferase-like (Major domain)"/>
    <property type="match status" value="1"/>
</dbReference>
<dbReference type="InterPro" id="IPR010977">
    <property type="entry name" value="Aromatic_deC"/>
</dbReference>
<dbReference type="InterPro" id="IPR002129">
    <property type="entry name" value="PyrdxlP-dep_de-COase"/>
</dbReference>
<dbReference type="InterPro" id="IPR015424">
    <property type="entry name" value="PyrdxlP-dep_Trfase"/>
</dbReference>
<dbReference type="InterPro" id="IPR015421">
    <property type="entry name" value="PyrdxlP-dep_Trfase_major"/>
</dbReference>
<dbReference type="InterPro" id="IPR015422">
    <property type="entry name" value="PyrdxlP-dep_Trfase_small"/>
</dbReference>
<dbReference type="InterPro" id="IPR021115">
    <property type="entry name" value="Pyridoxal-P_BS"/>
</dbReference>
<dbReference type="PANTHER" id="PTHR11999">
    <property type="entry name" value="GROUP II PYRIDOXAL-5-PHOSPHATE DECARBOXYLASE"/>
    <property type="match status" value="1"/>
</dbReference>
<dbReference type="PANTHER" id="PTHR11999:SF68">
    <property type="entry name" value="HISTIDINE DECARBOXYLASE"/>
    <property type="match status" value="1"/>
</dbReference>
<dbReference type="Pfam" id="PF00282">
    <property type="entry name" value="Pyridoxal_deC"/>
    <property type="match status" value="1"/>
</dbReference>
<dbReference type="PRINTS" id="PR00800">
    <property type="entry name" value="YHDCRBOXLASE"/>
</dbReference>
<dbReference type="SUPFAM" id="SSF53383">
    <property type="entry name" value="PLP-dependent transferases"/>
    <property type="match status" value="1"/>
</dbReference>
<dbReference type="PROSITE" id="PS00392">
    <property type="entry name" value="DDC_GAD_HDC_YDC"/>
    <property type="match status" value="1"/>
</dbReference>
<protein>
    <recommendedName>
        <fullName>Histidine decarboxylase</fullName>
        <shortName>HDC</shortName>
        <ecNumber>4.1.1.22</ecNumber>
    </recommendedName>
</protein>
<reference key="1">
    <citation type="journal article" date="1990" name="Nucleic Acids Res.">
        <title>Nucleotide sequence of the cDNA encoding L-histidine decarboxylase derived from human basophilic leukemia cell line, KU-812-F.</title>
        <authorList>
            <person name="Yamauchi K."/>
            <person name="Ruriko S."/>
            <person name="Ohkawara Y."/>
            <person name="Tanno Y."/>
            <person name="Maeyama K."/>
            <person name="Watanabe T."/>
            <person name="Satoh K."/>
            <person name="Yoshizawa M."/>
            <person name="Shibahara S."/>
            <person name="Takishima T."/>
        </authorList>
    </citation>
    <scope>NUCLEOTIDE SEQUENCE [MRNA] (ISOFORM 1)</scope>
</reference>
<reference key="2">
    <citation type="journal article" date="1991" name="DNA Seq.">
        <title>Cloning of the cDNA encoding human histidine decarboxylase from an erythroleukemia cell line and mapping of the gene locus to chromosome 15.</title>
        <authorList>
            <person name="Zahnow C.A."/>
            <person name="Yi H.F."/>
            <person name="McBride O.W."/>
            <person name="Joseph D.R."/>
        </authorList>
    </citation>
    <scope>NUCLEOTIDE SEQUENCE [MRNA] (ISOFORM 1)</scope>
</reference>
<reference key="3">
    <citation type="journal article" date="1992" name="Eur. J. Biochem.">
        <title>Functional analysis of alternatively spliced transcripts of the human histidine decarboxylase gene and its expression in human tissues and basophilic leukemia cells.</title>
        <authorList>
            <person name="Mamune-Sato R."/>
            <person name="Yamauchi K."/>
            <person name="Tanno Y."/>
            <person name="Ohkawara Y."/>
            <person name="Ohtsu H."/>
            <person name="Katayose D."/>
            <person name="Maeyama K."/>
            <person name="Watanabe T."/>
            <person name="Shibahara S."/>
            <person name="Takishima T."/>
        </authorList>
    </citation>
    <scope>NUCLEOTIDE SEQUENCE [MRNA] (ISOFORM 1)</scope>
    <scope>ALTERNATIVE SPLICING</scope>
    <source>
        <tissue>Leukemia</tissue>
    </source>
</reference>
<reference key="4">
    <citation type="journal article" date="1994" name="J. Biol. Chem.">
        <title>Structure of the L-histidine decarboxylase gene.</title>
        <authorList>
            <person name="Yatsunami K."/>
            <person name="Ohtsu H."/>
            <person name="Tsuchikawa M."/>
            <person name="Higuchi T."/>
            <person name="Ishibashi K."/>
            <person name="Shida A."/>
            <person name="Shima Y."/>
            <person name="Nakagawa S."/>
            <person name="Yamauchi K."/>
            <person name="Yamamoto M."/>
            <person name="Hayashi N."/>
            <person name="Watanabe T."/>
            <person name="Ichikawa A."/>
        </authorList>
    </citation>
    <scope>NUCLEOTIDE SEQUENCE [GENOMIC DNA]</scope>
</reference>
<reference key="5">
    <citation type="journal article" date="2006" name="Nature">
        <title>Analysis of the DNA sequence and duplication history of human chromosome 15.</title>
        <authorList>
            <person name="Zody M.C."/>
            <person name="Garber M."/>
            <person name="Sharpe T."/>
            <person name="Young S.K."/>
            <person name="Rowen L."/>
            <person name="O'Neill K."/>
            <person name="Whittaker C.A."/>
            <person name="Kamal M."/>
            <person name="Chang J.L."/>
            <person name="Cuomo C.A."/>
            <person name="Dewar K."/>
            <person name="FitzGerald M.G."/>
            <person name="Kodira C.D."/>
            <person name="Madan A."/>
            <person name="Qin S."/>
            <person name="Yang X."/>
            <person name="Abbasi N."/>
            <person name="Abouelleil A."/>
            <person name="Arachchi H.M."/>
            <person name="Baradarani L."/>
            <person name="Birditt B."/>
            <person name="Bloom S."/>
            <person name="Bloom T."/>
            <person name="Borowsky M.L."/>
            <person name="Burke J."/>
            <person name="Butler J."/>
            <person name="Cook A."/>
            <person name="DeArellano K."/>
            <person name="DeCaprio D."/>
            <person name="Dorris L. III"/>
            <person name="Dors M."/>
            <person name="Eichler E.E."/>
            <person name="Engels R."/>
            <person name="Fahey J."/>
            <person name="Fleetwood P."/>
            <person name="Friedman C."/>
            <person name="Gearin G."/>
            <person name="Hall J.L."/>
            <person name="Hensley G."/>
            <person name="Johnson E."/>
            <person name="Jones C."/>
            <person name="Kamat A."/>
            <person name="Kaur A."/>
            <person name="Locke D.P."/>
            <person name="Madan A."/>
            <person name="Munson G."/>
            <person name="Jaffe D.B."/>
            <person name="Lui A."/>
            <person name="Macdonald P."/>
            <person name="Mauceli E."/>
            <person name="Naylor J.W."/>
            <person name="Nesbitt R."/>
            <person name="Nicol R."/>
            <person name="O'Leary S.B."/>
            <person name="Ratcliffe A."/>
            <person name="Rounsley S."/>
            <person name="She X."/>
            <person name="Sneddon K.M.B."/>
            <person name="Stewart S."/>
            <person name="Sougnez C."/>
            <person name="Stone S.M."/>
            <person name="Topham K."/>
            <person name="Vincent D."/>
            <person name="Wang S."/>
            <person name="Zimmer A.R."/>
            <person name="Birren B.W."/>
            <person name="Hood L."/>
            <person name="Lander E.S."/>
            <person name="Nusbaum C."/>
        </authorList>
    </citation>
    <scope>NUCLEOTIDE SEQUENCE [LARGE SCALE GENOMIC DNA]</scope>
</reference>
<reference key="6">
    <citation type="journal article" date="2004" name="Genome Res.">
        <title>The status, quality, and expansion of the NIH full-length cDNA project: the Mammalian Gene Collection (MGC).</title>
        <authorList>
            <consortium name="The MGC Project Team"/>
        </authorList>
    </citation>
    <scope>NUCLEOTIDE SEQUENCE [LARGE SCALE MRNA] (ISOFORMS 1 AND 2)</scope>
    <scope>VARIANT MET-31</scope>
</reference>
<reference key="7">
    <citation type="journal article" date="2012" name="J. Biol. Chem.">
        <title>Structural study reveals that Ser-354 determines substrate specificity on human histidine decarboxylase.</title>
        <authorList>
            <person name="Komori H."/>
            <person name="Nitta Y."/>
            <person name="Ueno H."/>
            <person name="Higuchi Y."/>
        </authorList>
    </citation>
    <scope>X-RAY CRYSTALLOGRAPHY (1.8 ANGSTROMS) OF 2-477 IN COMPLEX WITH HISTIDINE METHYL ESTER AND PYRIDOXAL PHOSPHATE</scope>
    <scope>CATALYTIC ACTIVITY</scope>
    <scope>FUNCTION</scope>
    <scope>COFACTOR</scope>
    <scope>SUBUNIT</scope>
    <scope>BIOPHYSICOCHEMICAL PROPERTIES</scope>
    <scope>MUTAGENESIS OF LYS-305; TYR-334 AND SER-354</scope>
</reference>
<reference key="8">
    <citation type="journal article" date="2006" name="Science">
        <title>The consensus coding sequences of human breast and colorectal cancers.</title>
        <authorList>
            <person name="Sjoeblom T."/>
            <person name="Jones S."/>
            <person name="Wood L.D."/>
            <person name="Parsons D.W."/>
            <person name="Lin J."/>
            <person name="Barber T.D."/>
            <person name="Mandelker D."/>
            <person name="Leary R.J."/>
            <person name="Ptak J."/>
            <person name="Silliman N."/>
            <person name="Szabo S."/>
            <person name="Buckhaults P."/>
            <person name="Farrell C."/>
            <person name="Meeh P."/>
            <person name="Markowitz S.D."/>
            <person name="Willis J."/>
            <person name="Dawson D."/>
            <person name="Willson J.K.V."/>
            <person name="Gazdar A.F."/>
            <person name="Hartigan J."/>
            <person name="Wu L."/>
            <person name="Liu C."/>
            <person name="Parmigiani G."/>
            <person name="Park B.H."/>
            <person name="Bachman K.E."/>
            <person name="Papadopoulos N."/>
            <person name="Vogelstein B."/>
            <person name="Kinzler K.W."/>
            <person name="Velculescu V.E."/>
        </authorList>
    </citation>
    <scope>VARIANTS [LARGE SCALE ANALYSIS] VAL-49 AND LYS-285</scope>
</reference>
<accession>P19113</accession>
<accession>A1L4G0</accession>
<accession>B7ZM01</accession>
<keyword id="KW-0002">3D-structure</keyword>
<keyword id="KW-0025">Alternative splicing</keyword>
<keyword id="KW-0127">Catecholamine biosynthesis</keyword>
<keyword id="KW-0210">Decarboxylase</keyword>
<keyword id="KW-0456">Lyase</keyword>
<keyword id="KW-1267">Proteomics identification</keyword>
<keyword id="KW-0663">Pyridoxal phosphate</keyword>
<keyword id="KW-1185">Reference proteome</keyword>
<gene>
    <name type="primary">HDC</name>
</gene>
<name>DCHS_HUMAN</name>
<evidence type="ECO:0000269" key="1">
    <source>
    </source>
</evidence>
<evidence type="ECO:0000269" key="2">
    <source>
    </source>
</evidence>
<evidence type="ECO:0000269" key="3">
    <source>
    </source>
</evidence>
<evidence type="ECO:0000303" key="4">
    <source>
    </source>
</evidence>
<evidence type="ECO:0000305" key="5"/>
<evidence type="ECO:0007829" key="6">
    <source>
        <dbReference type="PDB" id="4E1O"/>
    </source>
</evidence>
<evidence type="ECO:0007829" key="7">
    <source>
        <dbReference type="PDB" id="7EIX"/>
    </source>
</evidence>
<proteinExistence type="evidence at protein level"/>
<sequence length="662" mass="74141">MMEPEEYRERGREMVDYICQYLSTVRERRVTPDVQPGYLRAQLPESAPEDPDSWDSIFGDIERIIMPGVVHWQSPHMHAYYPALTSWPSLLGDMLADAINCLGFTWASSPACTELEMNVMDWLAKMLGLPEHFLHHHPSSQGGGVLQSTVSESTLIALLAARKNKILEMKTSEPDADESCLNARLVAYASDQAHSSVEKAGLISLVKMKFLPVDDNFSLRGEALQKAIEEDKQRGLVPVFVCATLGTTGVCAFDCLSELGPICAREGLWLHIDAAYAGTAFLCPEFRGFLKGIEYADSFTFNPSKWMMVHFDCTGFWVKDKYKLQQTFSVNPIYLRHANSGVATDFMHWQIPLSRRFRSVKLWFVIRSFGVKNLQAHVRHGTEMAKYFESLVRNDPSFEIPAKRHLGLVVFRLKGPNCLTENVLKEIAKAGRLFLIPATIQDKLIIRFTVTSQFTTRDDILRDWNLIRDAATLILSQHCTSQPSPRVGNLISQIRGARAWACGTSLQSVSGAGDDPVQARKIIKQPQRVGAGPMKRENGLHLETLLDPVDDCFSEEAPDATKHKLSSFLFSYLSVQTKKKTVRSLSCNSVPVSAQKPLPTEASVKNGGSSRVRIFSRFPEDMMMLKKSAFKKLIKFYSVPSFPECSSQCGLQLPCCPLQAMV</sequence>